<organism>
    <name type="scientific">Salmonella paratyphi A (strain ATCC 9150 / SARB42)</name>
    <dbReference type="NCBI Taxonomy" id="295319"/>
    <lineage>
        <taxon>Bacteria</taxon>
        <taxon>Pseudomonadati</taxon>
        <taxon>Pseudomonadota</taxon>
        <taxon>Gammaproteobacteria</taxon>
        <taxon>Enterobacterales</taxon>
        <taxon>Enterobacteriaceae</taxon>
        <taxon>Salmonella</taxon>
    </lineage>
</organism>
<name>GLPK_SALPA</name>
<dbReference type="EC" id="2.7.1.30" evidence="1"/>
<dbReference type="EMBL" id="CP000026">
    <property type="protein sequence ID" value="AAV79693.1"/>
    <property type="molecule type" value="Genomic_DNA"/>
</dbReference>
<dbReference type="RefSeq" id="WP_000136809.1">
    <property type="nucleotide sequence ID" value="NC_006511.1"/>
</dbReference>
<dbReference type="SMR" id="Q5PIS3"/>
<dbReference type="KEGG" id="spt:SPA3929"/>
<dbReference type="HOGENOM" id="CLU_009281_2_3_6"/>
<dbReference type="UniPathway" id="UPA00618">
    <property type="reaction ID" value="UER00672"/>
</dbReference>
<dbReference type="Proteomes" id="UP000008185">
    <property type="component" value="Chromosome"/>
</dbReference>
<dbReference type="GO" id="GO:0005829">
    <property type="term" value="C:cytosol"/>
    <property type="evidence" value="ECO:0007669"/>
    <property type="project" value="TreeGrafter"/>
</dbReference>
<dbReference type="GO" id="GO:0005524">
    <property type="term" value="F:ATP binding"/>
    <property type="evidence" value="ECO:0007669"/>
    <property type="project" value="UniProtKB-UniRule"/>
</dbReference>
<dbReference type="GO" id="GO:0004370">
    <property type="term" value="F:glycerol kinase activity"/>
    <property type="evidence" value="ECO:0000250"/>
    <property type="project" value="UniProtKB"/>
</dbReference>
<dbReference type="GO" id="GO:0046872">
    <property type="term" value="F:metal ion binding"/>
    <property type="evidence" value="ECO:0007669"/>
    <property type="project" value="UniProtKB-KW"/>
</dbReference>
<dbReference type="GO" id="GO:0019563">
    <property type="term" value="P:glycerol catabolic process"/>
    <property type="evidence" value="ECO:0007669"/>
    <property type="project" value="UniProtKB-UniRule"/>
</dbReference>
<dbReference type="GO" id="GO:0006071">
    <property type="term" value="P:glycerol metabolic process"/>
    <property type="evidence" value="ECO:0000250"/>
    <property type="project" value="UniProtKB"/>
</dbReference>
<dbReference type="GO" id="GO:0006072">
    <property type="term" value="P:glycerol-3-phosphate metabolic process"/>
    <property type="evidence" value="ECO:0007669"/>
    <property type="project" value="InterPro"/>
</dbReference>
<dbReference type="CDD" id="cd07786">
    <property type="entry name" value="FGGY_EcGK_like"/>
    <property type="match status" value="1"/>
</dbReference>
<dbReference type="FunFam" id="3.30.420.40:FF:000007">
    <property type="entry name" value="Glycerol kinase"/>
    <property type="match status" value="1"/>
</dbReference>
<dbReference type="FunFam" id="3.30.420.40:FF:000008">
    <property type="entry name" value="Glycerol kinase"/>
    <property type="match status" value="1"/>
</dbReference>
<dbReference type="Gene3D" id="3.30.420.40">
    <property type="match status" value="2"/>
</dbReference>
<dbReference type="HAMAP" id="MF_00186">
    <property type="entry name" value="Glycerol_kin"/>
    <property type="match status" value="1"/>
</dbReference>
<dbReference type="InterPro" id="IPR043129">
    <property type="entry name" value="ATPase_NBD"/>
</dbReference>
<dbReference type="InterPro" id="IPR000577">
    <property type="entry name" value="Carb_kinase_FGGY"/>
</dbReference>
<dbReference type="InterPro" id="IPR018483">
    <property type="entry name" value="Carb_kinase_FGGY_CS"/>
</dbReference>
<dbReference type="InterPro" id="IPR018485">
    <property type="entry name" value="FGGY_C"/>
</dbReference>
<dbReference type="InterPro" id="IPR018484">
    <property type="entry name" value="FGGY_N"/>
</dbReference>
<dbReference type="InterPro" id="IPR005999">
    <property type="entry name" value="Glycerol_kin"/>
</dbReference>
<dbReference type="NCBIfam" id="TIGR01311">
    <property type="entry name" value="glycerol_kin"/>
    <property type="match status" value="1"/>
</dbReference>
<dbReference type="NCBIfam" id="NF000756">
    <property type="entry name" value="PRK00047.1"/>
    <property type="match status" value="1"/>
</dbReference>
<dbReference type="PANTHER" id="PTHR10196:SF69">
    <property type="entry name" value="GLYCEROL KINASE"/>
    <property type="match status" value="1"/>
</dbReference>
<dbReference type="PANTHER" id="PTHR10196">
    <property type="entry name" value="SUGAR KINASE"/>
    <property type="match status" value="1"/>
</dbReference>
<dbReference type="Pfam" id="PF02782">
    <property type="entry name" value="FGGY_C"/>
    <property type="match status" value="1"/>
</dbReference>
<dbReference type="Pfam" id="PF00370">
    <property type="entry name" value="FGGY_N"/>
    <property type="match status" value="1"/>
</dbReference>
<dbReference type="PIRSF" id="PIRSF000538">
    <property type="entry name" value="GlpK"/>
    <property type="match status" value="1"/>
</dbReference>
<dbReference type="SUPFAM" id="SSF53067">
    <property type="entry name" value="Actin-like ATPase domain"/>
    <property type="match status" value="2"/>
</dbReference>
<dbReference type="PROSITE" id="PS00933">
    <property type="entry name" value="FGGY_KINASES_1"/>
    <property type="match status" value="1"/>
</dbReference>
<dbReference type="PROSITE" id="PS00445">
    <property type="entry name" value="FGGY_KINASES_2"/>
    <property type="match status" value="1"/>
</dbReference>
<gene>
    <name evidence="1" type="primary">glpK</name>
    <name type="ordered locus">SPA3929</name>
</gene>
<proteinExistence type="inferred from homology"/>
<comment type="function">
    <text evidence="1">Key enzyme in the regulation of glycerol uptake and metabolism. Catalyzes the phosphorylation of glycerol to yield sn-glycerol 3-phosphate.</text>
</comment>
<comment type="catalytic activity">
    <reaction evidence="1">
        <text>glycerol + ATP = sn-glycerol 3-phosphate + ADP + H(+)</text>
        <dbReference type="Rhea" id="RHEA:21644"/>
        <dbReference type="ChEBI" id="CHEBI:15378"/>
        <dbReference type="ChEBI" id="CHEBI:17754"/>
        <dbReference type="ChEBI" id="CHEBI:30616"/>
        <dbReference type="ChEBI" id="CHEBI:57597"/>
        <dbReference type="ChEBI" id="CHEBI:456216"/>
        <dbReference type="EC" id="2.7.1.30"/>
    </reaction>
</comment>
<comment type="activity regulation">
    <text evidence="1">Activity of this regulatory enzyme is affected by several metabolites. Allosterically and non-competitively inhibited by fructose 1,6-bisphosphate (FBP) and unphosphorylated phosphocarrier protein EIIA-Glc (III-Glc), an integral component of the bacterial phosphotransferase (PTS) system.</text>
</comment>
<comment type="pathway">
    <text evidence="1">Polyol metabolism; glycerol degradation via glycerol kinase pathway; sn-glycerol 3-phosphate from glycerol: step 1/1.</text>
</comment>
<comment type="subunit">
    <text evidence="1">Homotetramer and homodimer (in equilibrium). Heterodimer with EIIA-Glc. Binds 1 zinc ion per glycerol kinase EIIA-Glc dimer. The zinc ion is important for dimerization.</text>
</comment>
<comment type="similarity">
    <text evidence="1">Belongs to the FGGY kinase family.</text>
</comment>
<reference key="1">
    <citation type="journal article" date="2004" name="Nat. Genet.">
        <title>Comparison of genome degradation in Paratyphi A and Typhi, human-restricted serovars of Salmonella enterica that cause typhoid.</title>
        <authorList>
            <person name="McClelland M."/>
            <person name="Sanderson K.E."/>
            <person name="Clifton S.W."/>
            <person name="Latreille P."/>
            <person name="Porwollik S."/>
            <person name="Sabo A."/>
            <person name="Meyer R."/>
            <person name="Bieri T."/>
            <person name="Ozersky P."/>
            <person name="McLellan M."/>
            <person name="Harkins C.R."/>
            <person name="Wang C."/>
            <person name="Nguyen C."/>
            <person name="Berghoff A."/>
            <person name="Elliott G."/>
            <person name="Kohlberg S."/>
            <person name="Strong C."/>
            <person name="Du F."/>
            <person name="Carter J."/>
            <person name="Kremizki C."/>
            <person name="Layman D."/>
            <person name="Leonard S."/>
            <person name="Sun H."/>
            <person name="Fulton L."/>
            <person name="Nash W."/>
            <person name="Miner T."/>
            <person name="Minx P."/>
            <person name="Delehaunty K."/>
            <person name="Fronick C."/>
            <person name="Magrini V."/>
            <person name="Nhan M."/>
            <person name="Warren W."/>
            <person name="Florea L."/>
            <person name="Spieth J."/>
            <person name="Wilson R.K."/>
        </authorList>
    </citation>
    <scope>NUCLEOTIDE SEQUENCE [LARGE SCALE GENOMIC DNA]</scope>
    <source>
        <strain>ATCC 9150 / SARB42</strain>
    </source>
</reference>
<evidence type="ECO:0000255" key="1">
    <source>
        <dbReference type="HAMAP-Rule" id="MF_00186"/>
    </source>
</evidence>
<accession>Q5PIS3</accession>
<protein>
    <recommendedName>
        <fullName evidence="1">Glycerol kinase</fullName>
        <ecNumber evidence="1">2.7.1.30</ecNumber>
    </recommendedName>
    <alternativeName>
        <fullName evidence="1">ATP:glycerol 3-phosphotransferase</fullName>
    </alternativeName>
    <alternativeName>
        <fullName evidence="1">Glycerokinase</fullName>
        <shortName evidence="1">GK</shortName>
    </alternativeName>
</protein>
<keyword id="KW-0021">Allosteric enzyme</keyword>
<keyword id="KW-0067">ATP-binding</keyword>
<keyword id="KW-0319">Glycerol metabolism</keyword>
<keyword id="KW-0418">Kinase</keyword>
<keyword id="KW-0479">Metal-binding</keyword>
<keyword id="KW-0547">Nucleotide-binding</keyword>
<keyword id="KW-0808">Transferase</keyword>
<keyword id="KW-0862">Zinc</keyword>
<feature type="chain" id="PRO_1000020776" description="Glycerol kinase">
    <location>
        <begin position="1"/>
        <end position="502"/>
    </location>
</feature>
<feature type="binding site" evidence="1">
    <location>
        <position position="14"/>
    </location>
    <ligand>
        <name>ADP</name>
        <dbReference type="ChEBI" id="CHEBI:456216"/>
    </ligand>
</feature>
<feature type="binding site" evidence="1">
    <location>
        <position position="14"/>
    </location>
    <ligand>
        <name>ATP</name>
        <dbReference type="ChEBI" id="CHEBI:30616"/>
    </ligand>
</feature>
<feature type="binding site" evidence="1">
    <location>
        <position position="14"/>
    </location>
    <ligand>
        <name>sn-glycerol 3-phosphate</name>
        <dbReference type="ChEBI" id="CHEBI:57597"/>
    </ligand>
</feature>
<feature type="binding site" evidence="1">
    <location>
        <position position="15"/>
    </location>
    <ligand>
        <name>ATP</name>
        <dbReference type="ChEBI" id="CHEBI:30616"/>
    </ligand>
</feature>
<feature type="binding site" evidence="1">
    <location>
        <position position="16"/>
    </location>
    <ligand>
        <name>ATP</name>
        <dbReference type="ChEBI" id="CHEBI:30616"/>
    </ligand>
</feature>
<feature type="binding site" evidence="1">
    <location>
        <position position="18"/>
    </location>
    <ligand>
        <name>ADP</name>
        <dbReference type="ChEBI" id="CHEBI:456216"/>
    </ligand>
</feature>
<feature type="binding site" evidence="1">
    <location>
        <position position="84"/>
    </location>
    <ligand>
        <name>glycerol</name>
        <dbReference type="ChEBI" id="CHEBI:17754"/>
    </ligand>
</feature>
<feature type="binding site" evidence="1">
    <location>
        <position position="84"/>
    </location>
    <ligand>
        <name>sn-glycerol 3-phosphate</name>
        <dbReference type="ChEBI" id="CHEBI:57597"/>
    </ligand>
</feature>
<feature type="binding site" evidence="1">
    <location>
        <position position="85"/>
    </location>
    <ligand>
        <name>glycerol</name>
        <dbReference type="ChEBI" id="CHEBI:17754"/>
    </ligand>
</feature>
<feature type="binding site" evidence="1">
    <location>
        <position position="85"/>
    </location>
    <ligand>
        <name>sn-glycerol 3-phosphate</name>
        <dbReference type="ChEBI" id="CHEBI:57597"/>
    </ligand>
</feature>
<feature type="binding site" evidence="1">
    <location>
        <position position="136"/>
    </location>
    <ligand>
        <name>glycerol</name>
        <dbReference type="ChEBI" id="CHEBI:17754"/>
    </ligand>
</feature>
<feature type="binding site" evidence="1">
    <location>
        <position position="136"/>
    </location>
    <ligand>
        <name>sn-glycerol 3-phosphate</name>
        <dbReference type="ChEBI" id="CHEBI:57597"/>
    </ligand>
</feature>
<feature type="binding site" evidence="1">
    <location>
        <position position="246"/>
    </location>
    <ligand>
        <name>glycerol</name>
        <dbReference type="ChEBI" id="CHEBI:17754"/>
    </ligand>
</feature>
<feature type="binding site" evidence="1">
    <location>
        <position position="246"/>
    </location>
    <ligand>
        <name>sn-glycerol 3-phosphate</name>
        <dbReference type="ChEBI" id="CHEBI:57597"/>
    </ligand>
</feature>
<feature type="binding site" evidence="1">
    <location>
        <position position="247"/>
    </location>
    <ligand>
        <name>glycerol</name>
        <dbReference type="ChEBI" id="CHEBI:17754"/>
    </ligand>
</feature>
<feature type="binding site" evidence="1">
    <location>
        <position position="268"/>
    </location>
    <ligand>
        <name>ADP</name>
        <dbReference type="ChEBI" id="CHEBI:456216"/>
    </ligand>
</feature>
<feature type="binding site" evidence="1">
    <location>
        <position position="268"/>
    </location>
    <ligand>
        <name>ATP</name>
        <dbReference type="ChEBI" id="CHEBI:30616"/>
    </ligand>
</feature>
<feature type="binding site" evidence="1">
    <location>
        <position position="311"/>
    </location>
    <ligand>
        <name>ADP</name>
        <dbReference type="ChEBI" id="CHEBI:456216"/>
    </ligand>
</feature>
<feature type="binding site" evidence="1">
    <location>
        <position position="311"/>
    </location>
    <ligand>
        <name>ATP</name>
        <dbReference type="ChEBI" id="CHEBI:30616"/>
    </ligand>
</feature>
<feature type="binding site" evidence="1">
    <location>
        <position position="315"/>
    </location>
    <ligand>
        <name>ATP</name>
        <dbReference type="ChEBI" id="CHEBI:30616"/>
    </ligand>
</feature>
<feature type="binding site" evidence="1">
    <location>
        <position position="412"/>
    </location>
    <ligand>
        <name>ADP</name>
        <dbReference type="ChEBI" id="CHEBI:456216"/>
    </ligand>
</feature>
<feature type="binding site" evidence="1">
    <location>
        <position position="412"/>
    </location>
    <ligand>
        <name>ATP</name>
        <dbReference type="ChEBI" id="CHEBI:30616"/>
    </ligand>
</feature>
<feature type="binding site" evidence="1">
    <location>
        <position position="416"/>
    </location>
    <ligand>
        <name>ADP</name>
        <dbReference type="ChEBI" id="CHEBI:456216"/>
    </ligand>
</feature>
<sequence length="502" mass="56052">MTEKKYIVALDQGTTSSRAVVMDHDANIVSVSQREFEQIYPKPGWVEHDPMEIWASQSSTLVEVLAKADISSDQIAAIGITNQRETAIVWERETGKPIYNAIVWQCRRTADICEQLKRDGLEDYIRDNTGLVVDPYFSGTKVKWILDHVEGSRERAKRGELLFGTVDTWLIWKMTQGRVHVTDYTNASRTMLFNIHDLDWDDKMLDVLDIPRAMLPQVRKSSEVYGQTNIGGKGGTRIPIAGIAGDQQAALFGQLCVKEGMAKNTYGTGCFMLMNTGEKAVKSENGLLTTIACGPSGEVNYALEGAVFMAGASIQWLRDEMKLISDAFDSEYFATKVKDTNGVYVVPAFTGLGAPYWDPYARGAIFGLTRGVNSNHIIRATLESIAYQTRDVLEAMQADSGIRLHALRVDGGAVANNFLMQFQSDILGTRVERPEVREVTALGAAYLAGLAVGYWQNLDELQEKAVIEREFRPGIETTERNYRYSGWKKAVKRAMAWEEHDK</sequence>